<evidence type="ECO:0000250" key="1"/>
<evidence type="ECO:0000255" key="2"/>
<evidence type="ECO:0000255" key="3">
    <source>
        <dbReference type="PROSITE-ProRule" id="PRU10095"/>
    </source>
</evidence>
<evidence type="ECO:0000305" key="4"/>
<accession>P23224</accession>
<gene>
    <name type="primary">mpl</name>
    <name type="synonym">prtA</name>
    <name type="ordered locus">lmo0203</name>
</gene>
<keyword id="KW-0378">Hydrolase</keyword>
<keyword id="KW-0479">Metal-binding</keyword>
<keyword id="KW-0482">Metalloprotease</keyword>
<keyword id="KW-0645">Protease</keyword>
<keyword id="KW-1185">Reference proteome</keyword>
<keyword id="KW-0964">Secreted</keyword>
<keyword id="KW-0732">Signal</keyword>
<keyword id="KW-0862">Zinc</keyword>
<keyword id="KW-0865">Zymogen</keyword>
<organism>
    <name type="scientific">Listeria monocytogenes serovar 1/2a (strain ATCC BAA-679 / EGD-e)</name>
    <dbReference type="NCBI Taxonomy" id="169963"/>
    <lineage>
        <taxon>Bacteria</taxon>
        <taxon>Bacillati</taxon>
        <taxon>Bacillota</taxon>
        <taxon>Bacilli</taxon>
        <taxon>Bacillales</taxon>
        <taxon>Listeriaceae</taxon>
        <taxon>Listeria</taxon>
    </lineage>
</organism>
<feature type="signal peptide" evidence="2">
    <location>
        <begin position="1"/>
        <end position="24"/>
    </location>
</feature>
<feature type="propeptide" id="PRO_0000028632" evidence="2">
    <location>
        <begin position="25"/>
        <end position="200"/>
    </location>
</feature>
<feature type="chain" id="PRO_0000028633" description="Zinc metalloproteinase">
    <location>
        <begin position="201"/>
        <end position="510"/>
    </location>
</feature>
<feature type="active site" evidence="3">
    <location>
        <position position="350"/>
    </location>
</feature>
<feature type="active site" description="Proton donor" evidence="3">
    <location>
        <position position="437"/>
    </location>
</feature>
<feature type="binding site" evidence="3">
    <location>
        <position position="349"/>
    </location>
    <ligand>
        <name>Zn(2+)</name>
        <dbReference type="ChEBI" id="CHEBI:29105"/>
        <note>catalytic</note>
    </ligand>
</feature>
<feature type="binding site" evidence="3">
    <location>
        <position position="353"/>
    </location>
    <ligand>
        <name>Zn(2+)</name>
        <dbReference type="ChEBI" id="CHEBI:29105"/>
        <note>catalytic</note>
    </ligand>
</feature>
<feature type="binding site" evidence="3">
    <location>
        <position position="373"/>
    </location>
    <ligand>
        <name>Zn(2+)</name>
        <dbReference type="ChEBI" id="CHEBI:29105"/>
        <note>catalytic</note>
    </ligand>
</feature>
<feature type="sequence conflict" description="In Ref. 2." evidence="4" ref="2">
    <original>V</original>
    <variation>A</variation>
    <location>
        <position position="186"/>
    </location>
</feature>
<feature type="sequence conflict" description="In Ref. 2." evidence="4" ref="2">
    <original>L</original>
    <variation>I</variation>
    <location>
        <position position="427"/>
    </location>
</feature>
<protein>
    <recommendedName>
        <fullName>Zinc metalloproteinase</fullName>
        <ecNumber>3.4.24.-</ecNumber>
    </recommendedName>
</protein>
<name>PRTA_LISMO</name>
<comment type="function">
    <text>Probably linked to the pathogenesis of listerial infection.</text>
</comment>
<comment type="cofactor">
    <cofactor evidence="1">
        <name>Zn(2+)</name>
        <dbReference type="ChEBI" id="CHEBI:29105"/>
    </cofactor>
    <text evidence="1">Binds 1 zinc ion.</text>
</comment>
<comment type="subcellular location">
    <subcellularLocation>
        <location>Secreted</location>
    </subcellularLocation>
</comment>
<comment type="induction">
    <text>The mpl and the listeriolysin genes being physically linked, their expression may be regulated in a similar manner.</text>
</comment>
<comment type="similarity">
    <text evidence="4">Belongs to the peptidase M4 family.</text>
</comment>
<dbReference type="EC" id="3.4.24.-"/>
<dbReference type="EMBL" id="X54619">
    <property type="protein sequence ID" value="CAA38439.1"/>
    <property type="molecule type" value="Genomic_DNA"/>
</dbReference>
<dbReference type="EMBL" id="AL591974">
    <property type="protein sequence ID" value="CAD00730.1"/>
    <property type="molecule type" value="Genomic_DNA"/>
</dbReference>
<dbReference type="PIR" id="A43575">
    <property type="entry name" value="A60280"/>
</dbReference>
<dbReference type="PIR" id="AD1100">
    <property type="entry name" value="AD1100"/>
</dbReference>
<dbReference type="RefSeq" id="NP_463734.1">
    <property type="nucleotide sequence ID" value="NC_003210.1"/>
</dbReference>
<dbReference type="RefSeq" id="WP_010989373.1">
    <property type="nucleotide sequence ID" value="NZ_CP149495.1"/>
</dbReference>
<dbReference type="SMR" id="P23224"/>
<dbReference type="STRING" id="169963.gene:17592839"/>
<dbReference type="MEROPS" id="M04.008"/>
<dbReference type="PaxDb" id="169963-lmo0203"/>
<dbReference type="EnsemblBacteria" id="CAD00730">
    <property type="protein sequence ID" value="CAD00730"/>
    <property type="gene ID" value="CAD00730"/>
</dbReference>
<dbReference type="GeneID" id="987034"/>
<dbReference type="KEGG" id="lmo:lmo0203"/>
<dbReference type="PATRIC" id="fig|169963.11.peg.208"/>
<dbReference type="eggNOG" id="COG3227">
    <property type="taxonomic scope" value="Bacteria"/>
</dbReference>
<dbReference type="HOGENOM" id="CLU_008590_5_2_9"/>
<dbReference type="OrthoDB" id="291295at2"/>
<dbReference type="PhylomeDB" id="P23224"/>
<dbReference type="BioCyc" id="LMON169963:LMO0203-MONOMER"/>
<dbReference type="Proteomes" id="UP000000817">
    <property type="component" value="Chromosome"/>
</dbReference>
<dbReference type="GO" id="GO:0005576">
    <property type="term" value="C:extracellular region"/>
    <property type="evidence" value="ECO:0007669"/>
    <property type="project" value="UniProtKB-SubCell"/>
</dbReference>
<dbReference type="GO" id="GO:0046872">
    <property type="term" value="F:metal ion binding"/>
    <property type="evidence" value="ECO:0007669"/>
    <property type="project" value="UniProtKB-KW"/>
</dbReference>
<dbReference type="GO" id="GO:0004222">
    <property type="term" value="F:metalloendopeptidase activity"/>
    <property type="evidence" value="ECO:0007669"/>
    <property type="project" value="InterPro"/>
</dbReference>
<dbReference type="GO" id="GO:0006508">
    <property type="term" value="P:proteolysis"/>
    <property type="evidence" value="ECO:0000318"/>
    <property type="project" value="GO_Central"/>
</dbReference>
<dbReference type="CDD" id="cd09597">
    <property type="entry name" value="M4_TLP"/>
    <property type="match status" value="1"/>
</dbReference>
<dbReference type="Gene3D" id="3.10.170.10">
    <property type="match status" value="1"/>
</dbReference>
<dbReference type="Gene3D" id="1.10.390.10">
    <property type="entry name" value="Neutral Protease Domain 2"/>
    <property type="match status" value="1"/>
</dbReference>
<dbReference type="InterPro" id="IPR011096">
    <property type="entry name" value="FTP_domain"/>
</dbReference>
<dbReference type="InterPro" id="IPR025711">
    <property type="entry name" value="PepSY"/>
</dbReference>
<dbReference type="InterPro" id="IPR023612">
    <property type="entry name" value="Peptidase_M4"/>
</dbReference>
<dbReference type="InterPro" id="IPR027268">
    <property type="entry name" value="Peptidase_M4/M1_CTD_sf"/>
</dbReference>
<dbReference type="InterPro" id="IPR001570">
    <property type="entry name" value="Peptidase_M4_C_domain"/>
</dbReference>
<dbReference type="InterPro" id="IPR013856">
    <property type="entry name" value="Peptidase_M4_domain"/>
</dbReference>
<dbReference type="InterPro" id="IPR050728">
    <property type="entry name" value="Zinc_Metalloprotease_M4"/>
</dbReference>
<dbReference type="PANTHER" id="PTHR33794">
    <property type="entry name" value="BACILLOLYSIN"/>
    <property type="match status" value="1"/>
</dbReference>
<dbReference type="PANTHER" id="PTHR33794:SF1">
    <property type="entry name" value="BACILLOLYSIN"/>
    <property type="match status" value="1"/>
</dbReference>
<dbReference type="Pfam" id="PF07504">
    <property type="entry name" value="FTP"/>
    <property type="match status" value="1"/>
</dbReference>
<dbReference type="Pfam" id="PF03413">
    <property type="entry name" value="PepSY"/>
    <property type="match status" value="1"/>
</dbReference>
<dbReference type="Pfam" id="PF01447">
    <property type="entry name" value="Peptidase_M4"/>
    <property type="match status" value="1"/>
</dbReference>
<dbReference type="Pfam" id="PF02868">
    <property type="entry name" value="Peptidase_M4_C"/>
    <property type="match status" value="1"/>
</dbReference>
<dbReference type="PRINTS" id="PR00730">
    <property type="entry name" value="THERMOLYSIN"/>
</dbReference>
<dbReference type="SUPFAM" id="SSF55486">
    <property type="entry name" value="Metalloproteases ('zincins'), catalytic domain"/>
    <property type="match status" value="1"/>
</dbReference>
<dbReference type="PROSITE" id="PS00142">
    <property type="entry name" value="ZINC_PROTEASE"/>
    <property type="match status" value="1"/>
</dbReference>
<proteinExistence type="evidence at transcript level"/>
<sequence length="510" mass="57411">MKSKLICIIMVIAFQAHFTMTVKADSVGEEKLQNNTQAKKTPADLKALPDSCEAKDFYKNFKILDMTKDKLGVTHYTLALSSGGYLTDNDEIKVHVTPDNKITFINGDLQQGQLRITNQIKITEKNAIEKAFEAIGQSEAHVKSYVGNPVKEKEIILNSRTKRLVYNIKLIFAEPEVASWIVQVDVETGAILKKQNMLSEVERADTHKDFQALGKGANRLLQRPLHVMKINDLFYLVDRTHKGLIRTFDLKHNTDTSFGKVVSNKTNMFTDPEFSSAVDAHFYASEVYEYYKNVHQLESLDGKGGEIDSFVHYGLNCNNAFWDGQEILYGDGDKKNFKPFSCAKTIVGHELTHAVIQYSAGLEYEGQSGALNESFADVFGYFIAPNHWLIGEDVCVRGSRDGRIRSIKDPDKYNQAAHMKDYESLPLTEEGDWGGVHYNSGIPNKAAYNTITKLGKEKTEQLYFRALKYYLTKKSQFTDAKKALQQAAKDLYGEDASKKVAEAWEAVGVN</sequence>
<reference key="1">
    <citation type="journal article" date="1991" name="Infect. Immun.">
        <title>Molecular cloning, sequencing, and identification of a metalloprotease gene from Listeria monocytogenes that is species specific and physically linked to the listeriolysin gene.</title>
        <authorList>
            <person name="Domann E."/>
            <person name="Leimeister-Waechter M."/>
            <person name="Goebel W."/>
            <person name="Chakraborty T."/>
        </authorList>
    </citation>
    <scope>NUCLEOTIDE SEQUENCE [GENOMIC DNA]</scope>
    <source>
        <strain>EGD / Serovar 1/2a</strain>
    </source>
</reference>
<reference key="2">
    <citation type="journal article" date="1989" name="Infect. Immun.">
        <title>Transcriptional mapping and nucleotide sequence of the Listeria monocytogenes hlyA region reveal structural features that may be involved in regulation.</title>
        <authorList>
            <person name="Mengaud J."/>
            <person name="Vicente M.-F."/>
            <person name="Cossart P."/>
        </authorList>
    </citation>
    <scope>NUCLEOTIDE SEQUENCE [GENOMIC DNA]</scope>
    <source>
        <strain>ATCC BAA-679 / EGD-e</strain>
    </source>
</reference>
<reference key="3">
    <citation type="journal article" date="2001" name="Science">
        <title>Comparative genomics of Listeria species.</title>
        <authorList>
            <person name="Glaser P."/>
            <person name="Frangeul L."/>
            <person name="Buchrieser C."/>
            <person name="Rusniok C."/>
            <person name="Amend A."/>
            <person name="Baquero F."/>
            <person name="Berche P."/>
            <person name="Bloecker H."/>
            <person name="Brandt P."/>
            <person name="Chakraborty T."/>
            <person name="Charbit A."/>
            <person name="Chetouani F."/>
            <person name="Couve E."/>
            <person name="de Daruvar A."/>
            <person name="Dehoux P."/>
            <person name="Domann E."/>
            <person name="Dominguez-Bernal G."/>
            <person name="Duchaud E."/>
            <person name="Durant L."/>
            <person name="Dussurget O."/>
            <person name="Entian K.-D."/>
            <person name="Fsihi H."/>
            <person name="Garcia-del Portillo F."/>
            <person name="Garrido P."/>
            <person name="Gautier L."/>
            <person name="Goebel W."/>
            <person name="Gomez-Lopez N."/>
            <person name="Hain T."/>
            <person name="Hauf J."/>
            <person name="Jackson D."/>
            <person name="Jones L.-M."/>
            <person name="Kaerst U."/>
            <person name="Kreft J."/>
            <person name="Kuhn M."/>
            <person name="Kunst F."/>
            <person name="Kurapkat G."/>
            <person name="Madueno E."/>
            <person name="Maitournam A."/>
            <person name="Mata Vicente J."/>
            <person name="Ng E."/>
            <person name="Nedjari H."/>
            <person name="Nordsiek G."/>
            <person name="Novella S."/>
            <person name="de Pablos B."/>
            <person name="Perez-Diaz J.-C."/>
            <person name="Purcell R."/>
            <person name="Remmel B."/>
            <person name="Rose M."/>
            <person name="Schlueter T."/>
            <person name="Simoes N."/>
            <person name="Tierrez A."/>
            <person name="Vazquez-Boland J.-A."/>
            <person name="Voss H."/>
            <person name="Wehland J."/>
            <person name="Cossart P."/>
        </authorList>
    </citation>
    <scope>NUCLEOTIDE SEQUENCE [LARGE SCALE GENOMIC DNA]</scope>
    <source>
        <strain>ATCC BAA-679 / EGD-e</strain>
    </source>
</reference>